<keyword id="KW-0002">3D-structure</keyword>
<keyword id="KW-1003">Cell membrane</keyword>
<keyword id="KW-0406">Ion transport</keyword>
<keyword id="KW-0472">Membrane</keyword>
<keyword id="KW-0520">NAD</keyword>
<keyword id="KW-0630">Potassium</keyword>
<keyword id="KW-0633">Potassium transport</keyword>
<keyword id="KW-1185">Reference proteome</keyword>
<keyword id="KW-0813">Transport</keyword>
<organism>
    <name type="scientific">Bacillus subtilis (strain 168)</name>
    <dbReference type="NCBI Taxonomy" id="224308"/>
    <lineage>
        <taxon>Bacteria</taxon>
        <taxon>Bacillati</taxon>
        <taxon>Bacillota</taxon>
        <taxon>Bacilli</taxon>
        <taxon>Bacillales</taxon>
        <taxon>Bacillaceae</taxon>
        <taxon>Bacillus</taxon>
    </lineage>
</organism>
<protein>
    <recommendedName>
        <fullName>Ktr system potassium uptake protein C</fullName>
        <shortName>K(+)-uptake protein KtrC</shortName>
    </recommendedName>
    <alternativeName>
        <fullName>ORF4</fullName>
    </alternativeName>
</protein>
<feature type="chain" id="PRO_0000049610" description="Ktr system potassium uptake protein C">
    <location>
        <begin position="1"/>
        <end position="221"/>
    </location>
</feature>
<feature type="domain" description="RCK N-terminal" evidence="2">
    <location>
        <begin position="2"/>
        <end position="118"/>
    </location>
</feature>
<feature type="domain" description="RCK C-terminal" evidence="3">
    <location>
        <begin position="135"/>
        <end position="219"/>
    </location>
</feature>
<feature type="binding site" evidence="1">
    <location>
        <position position="12"/>
    </location>
    <ligand>
        <name>NAD(+)</name>
        <dbReference type="ChEBI" id="CHEBI:57540"/>
    </ligand>
</feature>
<feature type="binding site" evidence="1">
    <location>
        <begin position="32"/>
        <end position="34"/>
    </location>
    <ligand>
        <name>NAD(+)</name>
        <dbReference type="ChEBI" id="CHEBI:57540"/>
    </ligand>
</feature>
<feature type="binding site" evidence="1">
    <location>
        <begin position="52"/>
        <end position="53"/>
    </location>
    <ligand>
        <name>NAD(+)</name>
        <dbReference type="ChEBI" id="CHEBI:57540"/>
    </ligand>
</feature>
<feature type="binding site" evidence="1">
    <location>
        <begin position="74"/>
        <end position="76"/>
    </location>
    <ligand>
        <name>NAD(+)</name>
        <dbReference type="ChEBI" id="CHEBI:57540"/>
    </ligand>
</feature>
<feature type="binding site" evidence="1">
    <location>
        <begin position="99"/>
        <end position="101"/>
    </location>
    <ligand>
        <name>NAD(+)</name>
        <dbReference type="ChEBI" id="CHEBI:57540"/>
    </ligand>
</feature>
<feature type="binding site" evidence="1">
    <location>
        <position position="105"/>
    </location>
    <ligand>
        <name>NAD(+)</name>
        <dbReference type="ChEBI" id="CHEBI:57540"/>
    </ligand>
</feature>
<feature type="binding site" evidence="1">
    <location>
        <position position="121"/>
    </location>
    <ligand>
        <name>NAD(+)</name>
        <dbReference type="ChEBI" id="CHEBI:57540"/>
    </ligand>
</feature>
<feature type="strand" evidence="6">
    <location>
        <begin position="5"/>
        <end position="8"/>
    </location>
</feature>
<feature type="helix" evidence="6">
    <location>
        <begin position="12"/>
        <end position="23"/>
    </location>
</feature>
<feature type="strand" evidence="6">
    <location>
        <begin position="29"/>
        <end position="33"/>
    </location>
</feature>
<feature type="helix" evidence="6">
    <location>
        <begin position="35"/>
        <end position="40"/>
    </location>
</feature>
<feature type="turn" evidence="6">
    <location>
        <begin position="41"/>
        <end position="44"/>
    </location>
</feature>
<feature type="strand" evidence="6">
    <location>
        <begin position="45"/>
        <end position="50"/>
    </location>
</feature>
<feature type="helix" evidence="6">
    <location>
        <begin position="56"/>
        <end position="61"/>
    </location>
</feature>
<feature type="strand" evidence="6">
    <location>
        <begin position="68"/>
        <end position="72"/>
    </location>
</feature>
<feature type="helix" evidence="6">
    <location>
        <begin position="78"/>
        <end position="90"/>
    </location>
</feature>
<feature type="strand" evidence="6">
    <location>
        <begin position="94"/>
        <end position="99"/>
    </location>
</feature>
<feature type="helix" evidence="6">
    <location>
        <begin position="103"/>
        <end position="111"/>
    </location>
</feature>
<feature type="strand" evidence="6">
    <location>
        <begin position="115"/>
        <end position="118"/>
    </location>
</feature>
<feature type="helix" evidence="6">
    <location>
        <begin position="120"/>
        <end position="133"/>
    </location>
</feature>
<feature type="strand" evidence="6">
    <location>
        <begin position="137"/>
        <end position="142"/>
    </location>
</feature>
<feature type="strand" evidence="6">
    <location>
        <begin position="144"/>
        <end position="153"/>
    </location>
</feature>
<feature type="turn" evidence="6">
    <location>
        <begin position="156"/>
        <end position="160"/>
    </location>
</feature>
<feature type="helix" evidence="6">
    <location>
        <begin position="163"/>
        <end position="166"/>
    </location>
</feature>
<feature type="helix" evidence="6">
    <location>
        <begin position="168"/>
        <end position="172"/>
    </location>
</feature>
<feature type="strand" evidence="6">
    <location>
        <begin position="175"/>
        <end position="181"/>
    </location>
</feature>
<feature type="strand" evidence="6">
    <location>
        <begin position="184"/>
        <end position="188"/>
    </location>
</feature>
<feature type="strand" evidence="6">
    <location>
        <begin position="200"/>
        <end position="206"/>
    </location>
</feature>
<feature type="helix" evidence="6">
    <location>
        <begin position="207"/>
        <end position="217"/>
    </location>
</feature>
<name>KTRC_BACSU</name>
<evidence type="ECO:0000250" key="1"/>
<evidence type="ECO:0000255" key="2">
    <source>
        <dbReference type="PROSITE-ProRule" id="PRU00543"/>
    </source>
</evidence>
<evidence type="ECO:0000255" key="3">
    <source>
        <dbReference type="PROSITE-ProRule" id="PRU00544"/>
    </source>
</evidence>
<evidence type="ECO:0000269" key="4">
    <source>
    </source>
</evidence>
<evidence type="ECO:0000305" key="5"/>
<evidence type="ECO:0007829" key="6">
    <source>
        <dbReference type="PDB" id="6I8V"/>
    </source>
</evidence>
<gene>
    <name type="primary">ktrC</name>
    <name type="synonym">ykqB</name>
    <name type="synonym">ylxV</name>
    <name type="synonym">yzaC</name>
    <name type="ordered locus">BSU14510</name>
</gene>
<reference key="1">
    <citation type="submission" date="1994-07" db="EMBL/GenBank/DDBJ databases">
        <title>The nucleotide sequence analysis of kinC region.</title>
        <authorList>
            <person name="Kobayashi K."/>
            <person name="Sato T."/>
            <person name="Kobayashi Y."/>
        </authorList>
    </citation>
    <scope>NUCLEOTIDE SEQUENCE [GENOMIC DNA]</scope>
    <source>
        <strain>168 / JH642</strain>
    </source>
</reference>
<reference key="2">
    <citation type="journal article" date="1996" name="Microbiology">
        <title>The ampS-nprE (124 degrees-127 degrees) region of the Bacillus subtilis 168 chromosome: sequencing of a 27 kb segment and identification of several genes in the area.</title>
        <authorList>
            <person name="Winters P."/>
            <person name="Caldwell R.M."/>
            <person name="Enfield L."/>
            <person name="Ferrari E."/>
        </authorList>
    </citation>
    <scope>NUCLEOTIDE SEQUENCE [GENOMIC DNA]</scope>
    <source>
        <strain>168</strain>
    </source>
</reference>
<reference key="3">
    <citation type="journal article" date="1997" name="Nature">
        <title>The complete genome sequence of the Gram-positive bacterium Bacillus subtilis.</title>
        <authorList>
            <person name="Kunst F."/>
            <person name="Ogasawara N."/>
            <person name="Moszer I."/>
            <person name="Albertini A.M."/>
            <person name="Alloni G."/>
            <person name="Azevedo V."/>
            <person name="Bertero M.G."/>
            <person name="Bessieres P."/>
            <person name="Bolotin A."/>
            <person name="Borchert S."/>
            <person name="Borriss R."/>
            <person name="Boursier L."/>
            <person name="Brans A."/>
            <person name="Braun M."/>
            <person name="Brignell S.C."/>
            <person name="Bron S."/>
            <person name="Brouillet S."/>
            <person name="Bruschi C.V."/>
            <person name="Caldwell B."/>
            <person name="Capuano V."/>
            <person name="Carter N.M."/>
            <person name="Choi S.-K."/>
            <person name="Codani J.-J."/>
            <person name="Connerton I.F."/>
            <person name="Cummings N.J."/>
            <person name="Daniel R.A."/>
            <person name="Denizot F."/>
            <person name="Devine K.M."/>
            <person name="Duesterhoeft A."/>
            <person name="Ehrlich S.D."/>
            <person name="Emmerson P.T."/>
            <person name="Entian K.-D."/>
            <person name="Errington J."/>
            <person name="Fabret C."/>
            <person name="Ferrari E."/>
            <person name="Foulger D."/>
            <person name="Fritz C."/>
            <person name="Fujita M."/>
            <person name="Fujita Y."/>
            <person name="Fuma S."/>
            <person name="Galizzi A."/>
            <person name="Galleron N."/>
            <person name="Ghim S.-Y."/>
            <person name="Glaser P."/>
            <person name="Goffeau A."/>
            <person name="Golightly E.J."/>
            <person name="Grandi G."/>
            <person name="Guiseppi G."/>
            <person name="Guy B.J."/>
            <person name="Haga K."/>
            <person name="Haiech J."/>
            <person name="Harwood C.R."/>
            <person name="Henaut A."/>
            <person name="Hilbert H."/>
            <person name="Holsappel S."/>
            <person name="Hosono S."/>
            <person name="Hullo M.-F."/>
            <person name="Itaya M."/>
            <person name="Jones L.-M."/>
            <person name="Joris B."/>
            <person name="Karamata D."/>
            <person name="Kasahara Y."/>
            <person name="Klaerr-Blanchard M."/>
            <person name="Klein C."/>
            <person name="Kobayashi Y."/>
            <person name="Koetter P."/>
            <person name="Koningstein G."/>
            <person name="Krogh S."/>
            <person name="Kumano M."/>
            <person name="Kurita K."/>
            <person name="Lapidus A."/>
            <person name="Lardinois S."/>
            <person name="Lauber J."/>
            <person name="Lazarevic V."/>
            <person name="Lee S.-M."/>
            <person name="Levine A."/>
            <person name="Liu H."/>
            <person name="Masuda S."/>
            <person name="Mauel C."/>
            <person name="Medigue C."/>
            <person name="Medina N."/>
            <person name="Mellado R.P."/>
            <person name="Mizuno M."/>
            <person name="Moestl D."/>
            <person name="Nakai S."/>
            <person name="Noback M."/>
            <person name="Noone D."/>
            <person name="O'Reilly M."/>
            <person name="Ogawa K."/>
            <person name="Ogiwara A."/>
            <person name="Oudega B."/>
            <person name="Park S.-H."/>
            <person name="Parro V."/>
            <person name="Pohl T.M."/>
            <person name="Portetelle D."/>
            <person name="Porwollik S."/>
            <person name="Prescott A.M."/>
            <person name="Presecan E."/>
            <person name="Pujic P."/>
            <person name="Purnelle B."/>
            <person name="Rapoport G."/>
            <person name="Rey M."/>
            <person name="Reynolds S."/>
            <person name="Rieger M."/>
            <person name="Rivolta C."/>
            <person name="Rocha E."/>
            <person name="Roche B."/>
            <person name="Rose M."/>
            <person name="Sadaie Y."/>
            <person name="Sato T."/>
            <person name="Scanlan E."/>
            <person name="Schleich S."/>
            <person name="Schroeter R."/>
            <person name="Scoffone F."/>
            <person name="Sekiguchi J."/>
            <person name="Sekowska A."/>
            <person name="Seror S.J."/>
            <person name="Serror P."/>
            <person name="Shin B.-S."/>
            <person name="Soldo B."/>
            <person name="Sorokin A."/>
            <person name="Tacconi E."/>
            <person name="Takagi T."/>
            <person name="Takahashi H."/>
            <person name="Takemaru K."/>
            <person name="Takeuchi M."/>
            <person name="Tamakoshi A."/>
            <person name="Tanaka T."/>
            <person name="Terpstra P."/>
            <person name="Tognoni A."/>
            <person name="Tosato V."/>
            <person name="Uchiyama S."/>
            <person name="Vandenbol M."/>
            <person name="Vannier F."/>
            <person name="Vassarotti A."/>
            <person name="Viari A."/>
            <person name="Wambutt R."/>
            <person name="Wedler E."/>
            <person name="Wedler H."/>
            <person name="Weitzenegger T."/>
            <person name="Winters P."/>
            <person name="Wipat A."/>
            <person name="Yamamoto H."/>
            <person name="Yamane K."/>
            <person name="Yasumoto K."/>
            <person name="Yata K."/>
            <person name="Yoshida K."/>
            <person name="Yoshikawa H.-F."/>
            <person name="Zumstein E."/>
            <person name="Yoshikawa H."/>
            <person name="Danchin A."/>
        </authorList>
    </citation>
    <scope>NUCLEOTIDE SEQUENCE [LARGE SCALE GENOMIC DNA]</scope>
    <source>
        <strain>168</strain>
    </source>
</reference>
<reference key="4">
    <citation type="journal article" date="2003" name="J. Bacteriol.">
        <title>KtrAB and KtrCD: two K+ uptake systems in Bacillus subtilis and their role in adaptation to hypertonicity.</title>
        <authorList>
            <person name="Holtmann G."/>
            <person name="Bakker E.P."/>
            <person name="Uozumi N."/>
            <person name="Bremer E."/>
        </authorList>
    </citation>
    <scope>FUNCTION</scope>
    <scope>DISRUPTION PHENOTYPE</scope>
</reference>
<dbReference type="EMBL" id="D37799">
    <property type="protein sequence ID" value="BAA07051.1"/>
    <property type="molecule type" value="Genomic_DNA"/>
</dbReference>
<dbReference type="EMBL" id="AF012285">
    <property type="protein sequence ID" value="AAC24926.1"/>
    <property type="molecule type" value="Genomic_DNA"/>
</dbReference>
<dbReference type="EMBL" id="AL009126">
    <property type="protein sequence ID" value="CAB13324.1"/>
    <property type="molecule type" value="Genomic_DNA"/>
</dbReference>
<dbReference type="PIR" id="A69862">
    <property type="entry name" value="A69862"/>
</dbReference>
<dbReference type="RefSeq" id="NP_389334.1">
    <property type="nucleotide sequence ID" value="NC_000964.3"/>
</dbReference>
<dbReference type="RefSeq" id="WP_003222311.1">
    <property type="nucleotide sequence ID" value="NZ_OZ025638.1"/>
</dbReference>
<dbReference type="PDB" id="6I8V">
    <property type="method" value="X-ray"/>
    <property type="resolution" value="1.99 A"/>
    <property type="chains" value="A=1-221"/>
</dbReference>
<dbReference type="PDBsum" id="6I8V"/>
<dbReference type="SMR" id="P39760"/>
<dbReference type="FunCoup" id="P39760">
    <property type="interactions" value="159"/>
</dbReference>
<dbReference type="STRING" id="224308.BSU14510"/>
<dbReference type="TCDB" id="2.A.38.4.4">
    <property type="family name" value="the k(+) transporter (trk) family"/>
</dbReference>
<dbReference type="jPOST" id="P39760"/>
<dbReference type="PaxDb" id="224308-BSU14510"/>
<dbReference type="EnsemblBacteria" id="CAB13324">
    <property type="protein sequence ID" value="CAB13324"/>
    <property type="gene ID" value="BSU_14510"/>
</dbReference>
<dbReference type="GeneID" id="86874043"/>
<dbReference type="GeneID" id="939429"/>
<dbReference type="KEGG" id="bsu:BSU14510"/>
<dbReference type="PATRIC" id="fig|224308.179.peg.1581"/>
<dbReference type="eggNOG" id="COG0569">
    <property type="taxonomic scope" value="Bacteria"/>
</dbReference>
<dbReference type="InParanoid" id="P39760"/>
<dbReference type="OrthoDB" id="9776294at2"/>
<dbReference type="PhylomeDB" id="P39760"/>
<dbReference type="BioCyc" id="BSUB:BSU14510-MONOMER"/>
<dbReference type="PRO" id="PR:P39760"/>
<dbReference type="Proteomes" id="UP000001570">
    <property type="component" value="Chromosome"/>
</dbReference>
<dbReference type="GO" id="GO:0005886">
    <property type="term" value="C:plasma membrane"/>
    <property type="evidence" value="ECO:0007669"/>
    <property type="project" value="UniProtKB-SubCell"/>
</dbReference>
<dbReference type="GO" id="GO:0008324">
    <property type="term" value="F:monoatomic cation transmembrane transporter activity"/>
    <property type="evidence" value="ECO:0007669"/>
    <property type="project" value="InterPro"/>
</dbReference>
<dbReference type="GO" id="GO:0006813">
    <property type="term" value="P:potassium ion transport"/>
    <property type="evidence" value="ECO:0007669"/>
    <property type="project" value="UniProtKB-KW"/>
</dbReference>
<dbReference type="Gene3D" id="3.40.50.720">
    <property type="entry name" value="NAD(P)-binding Rossmann-like Domain"/>
    <property type="match status" value="1"/>
</dbReference>
<dbReference type="Gene3D" id="3.30.70.1450">
    <property type="entry name" value="Regulator of K+ conductance, C-terminal domain"/>
    <property type="match status" value="1"/>
</dbReference>
<dbReference type="InterPro" id="IPR036291">
    <property type="entry name" value="NAD(P)-bd_dom_sf"/>
</dbReference>
<dbReference type="InterPro" id="IPR006037">
    <property type="entry name" value="RCK_C"/>
</dbReference>
<dbReference type="InterPro" id="IPR036721">
    <property type="entry name" value="RCK_C_sf"/>
</dbReference>
<dbReference type="InterPro" id="IPR003148">
    <property type="entry name" value="RCK_N"/>
</dbReference>
<dbReference type="InterPro" id="IPR050721">
    <property type="entry name" value="Trk_Ktr_HKT_K-transport"/>
</dbReference>
<dbReference type="PANTHER" id="PTHR43833:SF7">
    <property type="entry name" value="KTR SYSTEM POTASSIUM UPTAKE PROTEIN C"/>
    <property type="match status" value="1"/>
</dbReference>
<dbReference type="PANTHER" id="PTHR43833">
    <property type="entry name" value="POTASSIUM CHANNEL PROTEIN 2-RELATED-RELATED"/>
    <property type="match status" value="1"/>
</dbReference>
<dbReference type="Pfam" id="PF02080">
    <property type="entry name" value="TrkA_C"/>
    <property type="match status" value="1"/>
</dbReference>
<dbReference type="Pfam" id="PF02254">
    <property type="entry name" value="TrkA_N"/>
    <property type="match status" value="1"/>
</dbReference>
<dbReference type="SUPFAM" id="SSF51735">
    <property type="entry name" value="NAD(P)-binding Rossmann-fold domains"/>
    <property type="match status" value="1"/>
</dbReference>
<dbReference type="SUPFAM" id="SSF116726">
    <property type="entry name" value="TrkA C-terminal domain-like"/>
    <property type="match status" value="1"/>
</dbReference>
<dbReference type="PROSITE" id="PS51202">
    <property type="entry name" value="RCK_C"/>
    <property type="match status" value="1"/>
</dbReference>
<dbReference type="PROSITE" id="PS51201">
    <property type="entry name" value="RCK_N"/>
    <property type="match status" value="1"/>
</dbReference>
<proteinExistence type="evidence at protein level"/>
<accession>P39760</accession>
<comment type="function">
    <text evidence="4">Catalytic subunit of the KtrCD potassium uptake transporter. The 2 major potassium transporter complexes KtrAB and KtrCD confer resistance to both suddenly imposed and prolonged osmotic stress.</text>
</comment>
<comment type="subunit">
    <text evidence="1">Homodimer, tetramer (dimer of homodimer) and octamer (tetramer of homodimer). Part of the KtrCD complex formed by an octameric catalytic ring of KtrC and a membrane associated dimer of KtrD forming a potassium channel (By similarity).</text>
</comment>
<comment type="subcellular location">
    <subcellularLocation>
        <location evidence="1">Cell membrane</location>
        <topology evidence="1">Peripheral membrane protein</topology>
        <orientation evidence="1">Cytoplasmic side</orientation>
    </subcellularLocation>
</comment>
<comment type="disruption phenotype">
    <text evidence="4">Impaired potassium uptake.</text>
</comment>
<comment type="similarity">
    <text evidence="5">Belongs to the KtrA potassium transport family.</text>
</comment>
<sequence>MKKEFAVIGLGRFGGSICKALSEEGVEVMAMDIDEDKVNEYAKIASHAVIGDSTDESVLKNLGLRNFDHVIVAIGENIQASILTTLILKELGVHTITVKAQNDYHEKVLSKIGADHIVHPERDMAKRIAHNIVSNNVLDYLELSEEHSLVEIVANSRLAGNTLLDLDIRAKYGINIVAIKRGKEVIVSPLATEVIHQEDILIVIGSVTDISRFEKRVLHTK</sequence>